<proteinExistence type="inferred from homology"/>
<organism>
    <name type="scientific">Azotobacter vinelandii (strain DJ / ATCC BAA-1303)</name>
    <dbReference type="NCBI Taxonomy" id="322710"/>
    <lineage>
        <taxon>Bacteria</taxon>
        <taxon>Pseudomonadati</taxon>
        <taxon>Pseudomonadota</taxon>
        <taxon>Gammaproteobacteria</taxon>
        <taxon>Pseudomonadales</taxon>
        <taxon>Pseudomonadaceae</taxon>
        <taxon>Azotobacter</taxon>
    </lineage>
</organism>
<sequence>MTEANRILLGVNIDHVATLRQARGTRYPDPLKAALDAEEAGADGITVHLREDRRHIQERDVRVLKEVLQTRMNFEMGVTEEMLAFAELIRPAHACFVPETRQELTTEGGLDVAGQEARIRAAVERLARIGCEVSLFIDAEPQQIEAAARIGAPAVELHTGRYADARTPAETARELARIRDGVEYGLSHGLIVNAGHGLHYHNVEPVAAIPGMHELNIGHAIVAHALFVGFKAAVQEMKLLMVGAASRR</sequence>
<keyword id="KW-0963">Cytoplasm</keyword>
<keyword id="KW-0664">Pyridoxine biosynthesis</keyword>
<keyword id="KW-0808">Transferase</keyword>
<reference key="1">
    <citation type="journal article" date="2009" name="J. Bacteriol.">
        <title>Genome sequence of Azotobacter vinelandii, an obligate aerobe specialized to support diverse anaerobic metabolic processes.</title>
        <authorList>
            <person name="Setubal J.C."/>
            <person name="Dos Santos P."/>
            <person name="Goldman B.S."/>
            <person name="Ertesvaag H."/>
            <person name="Espin G."/>
            <person name="Rubio L.M."/>
            <person name="Valla S."/>
            <person name="Almeida N.F."/>
            <person name="Balasubramanian D."/>
            <person name="Cromes L."/>
            <person name="Curatti L."/>
            <person name="Du Z."/>
            <person name="Godsy E."/>
            <person name="Goodner B."/>
            <person name="Hellner-Burris K."/>
            <person name="Hernandez J.A."/>
            <person name="Houmiel K."/>
            <person name="Imperial J."/>
            <person name="Kennedy C."/>
            <person name="Larson T.J."/>
            <person name="Latreille P."/>
            <person name="Ligon L.S."/>
            <person name="Lu J."/>
            <person name="Maerk M."/>
            <person name="Miller N.M."/>
            <person name="Norton S."/>
            <person name="O'Carroll I.P."/>
            <person name="Paulsen I."/>
            <person name="Raulfs E.C."/>
            <person name="Roemer R."/>
            <person name="Rosser J."/>
            <person name="Segura D."/>
            <person name="Slater S."/>
            <person name="Stricklin S.L."/>
            <person name="Studholme D.J."/>
            <person name="Sun J."/>
            <person name="Viana C.J."/>
            <person name="Wallin E."/>
            <person name="Wang B."/>
            <person name="Wheeler C."/>
            <person name="Zhu H."/>
            <person name="Dean D.R."/>
            <person name="Dixon R."/>
            <person name="Wood D."/>
        </authorList>
    </citation>
    <scope>NUCLEOTIDE SEQUENCE [LARGE SCALE GENOMIC DNA]</scope>
    <source>
        <strain>DJ / ATCC BAA-1303</strain>
    </source>
</reference>
<name>PDXJ_AZOVD</name>
<comment type="function">
    <text evidence="1">Catalyzes the complicated ring closure reaction between the two acyclic compounds 1-deoxy-D-xylulose-5-phosphate (DXP) and 3-amino-2-oxopropyl phosphate (1-amino-acetone-3-phosphate or AAP) to form pyridoxine 5'-phosphate (PNP) and inorganic phosphate.</text>
</comment>
<comment type="catalytic activity">
    <reaction evidence="1">
        <text>3-amino-2-oxopropyl phosphate + 1-deoxy-D-xylulose 5-phosphate = pyridoxine 5'-phosphate + phosphate + 2 H2O + H(+)</text>
        <dbReference type="Rhea" id="RHEA:15265"/>
        <dbReference type="ChEBI" id="CHEBI:15377"/>
        <dbReference type="ChEBI" id="CHEBI:15378"/>
        <dbReference type="ChEBI" id="CHEBI:43474"/>
        <dbReference type="ChEBI" id="CHEBI:57279"/>
        <dbReference type="ChEBI" id="CHEBI:57792"/>
        <dbReference type="ChEBI" id="CHEBI:58589"/>
        <dbReference type="EC" id="2.6.99.2"/>
    </reaction>
</comment>
<comment type="pathway">
    <text evidence="1">Cofactor biosynthesis; pyridoxine 5'-phosphate biosynthesis; pyridoxine 5'-phosphate from D-erythrose 4-phosphate: step 5/5.</text>
</comment>
<comment type="subunit">
    <text evidence="1">Homooctamer; tetramer of dimers.</text>
</comment>
<comment type="subcellular location">
    <subcellularLocation>
        <location evidence="1">Cytoplasm</location>
    </subcellularLocation>
</comment>
<comment type="similarity">
    <text evidence="1">Belongs to the PNP synthase family.</text>
</comment>
<evidence type="ECO:0000255" key="1">
    <source>
        <dbReference type="HAMAP-Rule" id="MF_00279"/>
    </source>
</evidence>
<feature type="chain" id="PRO_1000204805" description="Pyridoxine 5'-phosphate synthase">
    <location>
        <begin position="1"/>
        <end position="248"/>
    </location>
</feature>
<feature type="active site" description="Proton acceptor" evidence="1">
    <location>
        <position position="48"/>
    </location>
</feature>
<feature type="active site" description="Proton acceptor" evidence="1">
    <location>
        <position position="75"/>
    </location>
</feature>
<feature type="active site" description="Proton donor" evidence="1">
    <location>
        <position position="196"/>
    </location>
</feature>
<feature type="binding site" evidence="1">
    <location>
        <position position="12"/>
    </location>
    <ligand>
        <name>3-amino-2-oxopropyl phosphate</name>
        <dbReference type="ChEBI" id="CHEBI:57279"/>
    </ligand>
</feature>
<feature type="binding site" evidence="1">
    <location>
        <begin position="14"/>
        <end position="15"/>
    </location>
    <ligand>
        <name>1-deoxy-D-xylulose 5-phosphate</name>
        <dbReference type="ChEBI" id="CHEBI:57792"/>
    </ligand>
</feature>
<feature type="binding site" evidence="1">
    <location>
        <position position="23"/>
    </location>
    <ligand>
        <name>3-amino-2-oxopropyl phosphate</name>
        <dbReference type="ChEBI" id="CHEBI:57279"/>
    </ligand>
</feature>
<feature type="binding site" evidence="1">
    <location>
        <position position="50"/>
    </location>
    <ligand>
        <name>1-deoxy-D-xylulose 5-phosphate</name>
        <dbReference type="ChEBI" id="CHEBI:57792"/>
    </ligand>
</feature>
<feature type="binding site" evidence="1">
    <location>
        <position position="55"/>
    </location>
    <ligand>
        <name>1-deoxy-D-xylulose 5-phosphate</name>
        <dbReference type="ChEBI" id="CHEBI:57792"/>
    </ligand>
</feature>
<feature type="binding site" evidence="1">
    <location>
        <position position="105"/>
    </location>
    <ligand>
        <name>1-deoxy-D-xylulose 5-phosphate</name>
        <dbReference type="ChEBI" id="CHEBI:57792"/>
    </ligand>
</feature>
<feature type="binding site" evidence="1">
    <location>
        <position position="197"/>
    </location>
    <ligand>
        <name>3-amino-2-oxopropyl phosphate</name>
        <dbReference type="ChEBI" id="CHEBI:57279"/>
    </ligand>
</feature>
<feature type="binding site" evidence="1">
    <location>
        <begin position="218"/>
        <end position="219"/>
    </location>
    <ligand>
        <name>3-amino-2-oxopropyl phosphate</name>
        <dbReference type="ChEBI" id="CHEBI:57279"/>
    </ligand>
</feature>
<feature type="site" description="Transition state stabilizer" evidence="1">
    <location>
        <position position="156"/>
    </location>
</feature>
<protein>
    <recommendedName>
        <fullName evidence="1">Pyridoxine 5'-phosphate synthase</fullName>
        <shortName evidence="1">PNP synthase</shortName>
        <ecNumber evidence="1">2.6.99.2</ecNumber>
    </recommendedName>
</protein>
<accession>C1DQS7</accession>
<dbReference type="EC" id="2.6.99.2" evidence="1"/>
<dbReference type="EMBL" id="CP001157">
    <property type="protein sequence ID" value="ACO77600.1"/>
    <property type="molecule type" value="Genomic_DNA"/>
</dbReference>
<dbReference type="RefSeq" id="WP_012700019.1">
    <property type="nucleotide sequence ID" value="NC_012560.1"/>
</dbReference>
<dbReference type="SMR" id="C1DQS7"/>
<dbReference type="STRING" id="322710.Avin_13830"/>
<dbReference type="EnsemblBacteria" id="ACO77600">
    <property type="protein sequence ID" value="ACO77600"/>
    <property type="gene ID" value="Avin_13830"/>
</dbReference>
<dbReference type="GeneID" id="88184684"/>
<dbReference type="KEGG" id="avn:Avin_13830"/>
<dbReference type="eggNOG" id="COG0854">
    <property type="taxonomic scope" value="Bacteria"/>
</dbReference>
<dbReference type="HOGENOM" id="CLU_074563_0_0_6"/>
<dbReference type="OrthoDB" id="9806590at2"/>
<dbReference type="UniPathway" id="UPA00244">
    <property type="reaction ID" value="UER00313"/>
</dbReference>
<dbReference type="Proteomes" id="UP000002424">
    <property type="component" value="Chromosome"/>
</dbReference>
<dbReference type="GO" id="GO:0005829">
    <property type="term" value="C:cytosol"/>
    <property type="evidence" value="ECO:0007669"/>
    <property type="project" value="TreeGrafter"/>
</dbReference>
<dbReference type="GO" id="GO:0033856">
    <property type="term" value="F:pyridoxine 5'-phosphate synthase activity"/>
    <property type="evidence" value="ECO:0007669"/>
    <property type="project" value="UniProtKB-EC"/>
</dbReference>
<dbReference type="GO" id="GO:0008615">
    <property type="term" value="P:pyridoxine biosynthetic process"/>
    <property type="evidence" value="ECO:0007669"/>
    <property type="project" value="UniProtKB-UniRule"/>
</dbReference>
<dbReference type="CDD" id="cd00003">
    <property type="entry name" value="PNPsynthase"/>
    <property type="match status" value="1"/>
</dbReference>
<dbReference type="FunFam" id="3.20.20.70:FF:000042">
    <property type="entry name" value="Pyridoxine 5'-phosphate synthase"/>
    <property type="match status" value="1"/>
</dbReference>
<dbReference type="Gene3D" id="3.20.20.70">
    <property type="entry name" value="Aldolase class I"/>
    <property type="match status" value="1"/>
</dbReference>
<dbReference type="HAMAP" id="MF_00279">
    <property type="entry name" value="PdxJ"/>
    <property type="match status" value="1"/>
</dbReference>
<dbReference type="InterPro" id="IPR013785">
    <property type="entry name" value="Aldolase_TIM"/>
</dbReference>
<dbReference type="InterPro" id="IPR004569">
    <property type="entry name" value="PyrdxlP_synth_PdxJ"/>
</dbReference>
<dbReference type="InterPro" id="IPR036130">
    <property type="entry name" value="Pyridoxine-5'_phos_synth"/>
</dbReference>
<dbReference type="NCBIfam" id="TIGR00559">
    <property type="entry name" value="pdxJ"/>
    <property type="match status" value="1"/>
</dbReference>
<dbReference type="NCBIfam" id="NF003623">
    <property type="entry name" value="PRK05265.1-1"/>
    <property type="match status" value="1"/>
</dbReference>
<dbReference type="NCBIfam" id="NF003625">
    <property type="entry name" value="PRK05265.1-3"/>
    <property type="match status" value="1"/>
</dbReference>
<dbReference type="NCBIfam" id="NF003627">
    <property type="entry name" value="PRK05265.1-5"/>
    <property type="match status" value="1"/>
</dbReference>
<dbReference type="PANTHER" id="PTHR30456">
    <property type="entry name" value="PYRIDOXINE 5'-PHOSPHATE SYNTHASE"/>
    <property type="match status" value="1"/>
</dbReference>
<dbReference type="PANTHER" id="PTHR30456:SF0">
    <property type="entry name" value="PYRIDOXINE 5'-PHOSPHATE SYNTHASE"/>
    <property type="match status" value="1"/>
</dbReference>
<dbReference type="Pfam" id="PF03740">
    <property type="entry name" value="PdxJ"/>
    <property type="match status" value="1"/>
</dbReference>
<dbReference type="SUPFAM" id="SSF63892">
    <property type="entry name" value="Pyridoxine 5'-phosphate synthase"/>
    <property type="match status" value="1"/>
</dbReference>
<gene>
    <name evidence="1" type="primary">pdxJ</name>
    <name type="ordered locus">Avin_13830</name>
</gene>